<sequence length="31" mass="3401">MPTITSYFGFLLAALTITSVLFIGLSKIRLI</sequence>
<protein>
    <recommendedName>
        <fullName evidence="1">Cytochrome b6-f complex subunit 6</fullName>
    </recommendedName>
    <alternativeName>
        <fullName evidence="1">Cytochrome b6-f complex subunit PetL</fullName>
    </alternativeName>
    <alternativeName>
        <fullName evidence="1">Cytochrome b6-f complex subunit VI</fullName>
    </alternativeName>
</protein>
<feature type="chain" id="PRO_0000300143" description="Cytochrome b6-f complex subunit 6">
    <location>
        <begin position="1"/>
        <end position="31"/>
    </location>
</feature>
<feature type="transmembrane region" description="Helical" evidence="1">
    <location>
        <begin position="4"/>
        <end position="24"/>
    </location>
</feature>
<geneLocation type="chloroplast"/>
<accession>A4QL37</accession>
<name>PETL_DRANE</name>
<organism>
    <name type="scientific">Draba nemorosa</name>
    <name type="common">Woodland whitlowgrass</name>
    <dbReference type="NCBI Taxonomy" id="171822"/>
    <lineage>
        <taxon>Eukaryota</taxon>
        <taxon>Viridiplantae</taxon>
        <taxon>Streptophyta</taxon>
        <taxon>Embryophyta</taxon>
        <taxon>Tracheophyta</taxon>
        <taxon>Spermatophyta</taxon>
        <taxon>Magnoliopsida</taxon>
        <taxon>eudicotyledons</taxon>
        <taxon>Gunneridae</taxon>
        <taxon>Pentapetalae</taxon>
        <taxon>rosids</taxon>
        <taxon>malvids</taxon>
        <taxon>Brassicales</taxon>
        <taxon>Brassicaceae</taxon>
        <taxon>Arabideae</taxon>
        <taxon>Draba</taxon>
    </lineage>
</organism>
<keyword id="KW-0150">Chloroplast</keyword>
<keyword id="KW-0249">Electron transport</keyword>
<keyword id="KW-0472">Membrane</keyword>
<keyword id="KW-0602">Photosynthesis</keyword>
<keyword id="KW-0934">Plastid</keyword>
<keyword id="KW-0793">Thylakoid</keyword>
<keyword id="KW-0812">Transmembrane</keyword>
<keyword id="KW-1133">Transmembrane helix</keyword>
<keyword id="KW-0813">Transport</keyword>
<gene>
    <name evidence="1" type="primary">petL</name>
</gene>
<dbReference type="EMBL" id="AP009373">
    <property type="protein sequence ID" value="BAF50392.1"/>
    <property type="molecule type" value="Genomic_DNA"/>
</dbReference>
<dbReference type="RefSeq" id="YP_001123568.1">
    <property type="nucleotide sequence ID" value="NC_009272.1"/>
</dbReference>
<dbReference type="SMR" id="A4QL37"/>
<dbReference type="GeneID" id="4964673"/>
<dbReference type="GO" id="GO:0009535">
    <property type="term" value="C:chloroplast thylakoid membrane"/>
    <property type="evidence" value="ECO:0007669"/>
    <property type="project" value="UniProtKB-SubCell"/>
</dbReference>
<dbReference type="GO" id="GO:0009512">
    <property type="term" value="C:cytochrome b6f complex"/>
    <property type="evidence" value="ECO:0007669"/>
    <property type="project" value="InterPro"/>
</dbReference>
<dbReference type="GO" id="GO:0045158">
    <property type="term" value="F:electron transporter, transferring electrons within cytochrome b6/f complex of photosystem II activity"/>
    <property type="evidence" value="ECO:0007669"/>
    <property type="project" value="UniProtKB-UniRule"/>
</dbReference>
<dbReference type="GO" id="GO:0015979">
    <property type="term" value="P:photosynthesis"/>
    <property type="evidence" value="ECO:0007669"/>
    <property type="project" value="UniProtKB-KW"/>
</dbReference>
<dbReference type="HAMAP" id="MF_00433">
    <property type="entry name" value="Cytb6_f_PetL"/>
    <property type="match status" value="1"/>
</dbReference>
<dbReference type="InterPro" id="IPR007802">
    <property type="entry name" value="Cyt_b6/f_cplx_su6"/>
</dbReference>
<dbReference type="PANTHER" id="PTHR37266">
    <property type="entry name" value="CYTOCHROME B6-F COMPLEX SUBUNIT 6"/>
    <property type="match status" value="1"/>
</dbReference>
<dbReference type="PANTHER" id="PTHR37266:SF1">
    <property type="entry name" value="CYTOCHROME B6-F COMPLEX SUBUNIT 6"/>
    <property type="match status" value="1"/>
</dbReference>
<dbReference type="Pfam" id="PF05115">
    <property type="entry name" value="PetL"/>
    <property type="match status" value="1"/>
</dbReference>
<comment type="function">
    <text evidence="1">Component of the cytochrome b6-f complex, which mediates electron transfer between photosystem II (PSII) and photosystem I (PSI), cyclic electron flow around PSI, and state transitions. PetL is important for photoautotrophic growth as well as for electron transfer efficiency and stability of the cytochrome b6-f complex.</text>
</comment>
<comment type="subunit">
    <text evidence="1">The 4 large subunits of the cytochrome b6-f complex are cytochrome b6, subunit IV (17 kDa polypeptide, PetD), cytochrome f and the Rieske protein, while the 4 small subunits are PetG, PetL, PetM and PetN. The complex functions as a dimer.</text>
</comment>
<comment type="subcellular location">
    <subcellularLocation>
        <location evidence="1">Plastid</location>
        <location evidence="1">Chloroplast thylakoid membrane</location>
        <topology evidence="1">Single-pass membrane protein</topology>
    </subcellularLocation>
</comment>
<comment type="similarity">
    <text evidence="1">Belongs to the PetL family.</text>
</comment>
<evidence type="ECO:0000255" key="1">
    <source>
        <dbReference type="HAMAP-Rule" id="MF_00433"/>
    </source>
</evidence>
<proteinExistence type="inferred from homology"/>
<reference key="1">
    <citation type="submission" date="2007-03" db="EMBL/GenBank/DDBJ databases">
        <title>Sequencing analysis of Draba nemoroza chloroplast DNA.</title>
        <authorList>
            <person name="Hosouchi T."/>
            <person name="Tsuruoka H."/>
            <person name="Kotani H."/>
        </authorList>
    </citation>
    <scope>NUCLEOTIDE SEQUENCE [LARGE SCALE GENOMIC DNA]</scope>
</reference>